<feature type="chain" id="PRO_0000291270" description="UPF0182 protein AAur_2732">
    <location>
        <begin position="1"/>
        <end position="998"/>
    </location>
</feature>
<feature type="transmembrane region" description="Helical" evidence="1">
    <location>
        <begin position="18"/>
        <end position="38"/>
    </location>
</feature>
<feature type="transmembrane region" description="Helical" evidence="1">
    <location>
        <begin position="64"/>
        <end position="84"/>
    </location>
</feature>
<feature type="transmembrane region" description="Helical" evidence="1">
    <location>
        <begin position="115"/>
        <end position="135"/>
    </location>
</feature>
<feature type="transmembrane region" description="Helical" evidence="1">
    <location>
        <begin position="168"/>
        <end position="188"/>
    </location>
</feature>
<feature type="transmembrane region" description="Helical" evidence="1">
    <location>
        <begin position="211"/>
        <end position="231"/>
    </location>
</feature>
<feature type="transmembrane region" description="Helical" evidence="1">
    <location>
        <begin position="260"/>
        <end position="280"/>
    </location>
</feature>
<feature type="transmembrane region" description="Helical" evidence="1">
    <location>
        <begin position="287"/>
        <end position="307"/>
    </location>
</feature>
<feature type="region of interest" description="Disordered" evidence="2">
    <location>
        <begin position="490"/>
        <end position="518"/>
    </location>
</feature>
<feature type="region of interest" description="Disordered" evidence="2">
    <location>
        <begin position="888"/>
        <end position="923"/>
    </location>
</feature>
<feature type="region of interest" description="Disordered" evidence="2">
    <location>
        <begin position="971"/>
        <end position="998"/>
    </location>
</feature>
<feature type="compositionally biased region" description="Basic and acidic residues" evidence="2">
    <location>
        <begin position="496"/>
        <end position="509"/>
    </location>
</feature>
<feature type="compositionally biased region" description="Pro residues" evidence="2">
    <location>
        <begin position="908"/>
        <end position="919"/>
    </location>
</feature>
<feature type="compositionally biased region" description="Low complexity" evidence="2">
    <location>
        <begin position="976"/>
        <end position="990"/>
    </location>
</feature>
<evidence type="ECO:0000255" key="1">
    <source>
        <dbReference type="HAMAP-Rule" id="MF_01600"/>
    </source>
</evidence>
<evidence type="ECO:0000256" key="2">
    <source>
        <dbReference type="SAM" id="MobiDB-lite"/>
    </source>
</evidence>
<evidence type="ECO:0000305" key="3"/>
<dbReference type="EMBL" id="CP000474">
    <property type="protein sequence ID" value="ABM07879.1"/>
    <property type="status" value="ALT_INIT"/>
    <property type="molecule type" value="Genomic_DNA"/>
</dbReference>
<dbReference type="RefSeq" id="WP_187329890.1">
    <property type="nucleotide sequence ID" value="NC_008711.1"/>
</dbReference>
<dbReference type="SMR" id="A1R883"/>
<dbReference type="STRING" id="290340.AAur_2732"/>
<dbReference type="KEGG" id="aau:AAur_2732"/>
<dbReference type="eggNOG" id="COG1615">
    <property type="taxonomic scope" value="Bacteria"/>
</dbReference>
<dbReference type="HOGENOM" id="CLU_007733_1_0_11"/>
<dbReference type="Proteomes" id="UP000000637">
    <property type="component" value="Chromosome"/>
</dbReference>
<dbReference type="GO" id="GO:0005576">
    <property type="term" value="C:extracellular region"/>
    <property type="evidence" value="ECO:0007669"/>
    <property type="project" value="TreeGrafter"/>
</dbReference>
<dbReference type="GO" id="GO:0005886">
    <property type="term" value="C:plasma membrane"/>
    <property type="evidence" value="ECO:0007669"/>
    <property type="project" value="UniProtKB-SubCell"/>
</dbReference>
<dbReference type="HAMAP" id="MF_01600">
    <property type="entry name" value="UPF0182"/>
    <property type="match status" value="1"/>
</dbReference>
<dbReference type="InterPro" id="IPR005372">
    <property type="entry name" value="UPF0182"/>
</dbReference>
<dbReference type="NCBIfam" id="NF000825">
    <property type="entry name" value="PRK00068.1"/>
    <property type="match status" value="1"/>
</dbReference>
<dbReference type="PANTHER" id="PTHR39344">
    <property type="entry name" value="UPF0182 PROTEIN SLL1060"/>
    <property type="match status" value="1"/>
</dbReference>
<dbReference type="PANTHER" id="PTHR39344:SF1">
    <property type="entry name" value="UPF0182 PROTEIN SLL1060"/>
    <property type="match status" value="1"/>
</dbReference>
<dbReference type="Pfam" id="PF03699">
    <property type="entry name" value="UPF0182"/>
    <property type="match status" value="1"/>
</dbReference>
<keyword id="KW-1003">Cell membrane</keyword>
<keyword id="KW-0472">Membrane</keyword>
<keyword id="KW-0812">Transmembrane</keyword>
<keyword id="KW-1133">Transmembrane helix</keyword>
<sequence length="998" mass="108382">MSRPASSNPPGRSPLRRGALTPTLIVVAVAVVGFIFFANVWTDVLWYQQLGFFEVYIRENLARIITFLIGFAMMFAAVFFAIRIAYRSRPVYAPDAEARDNLNRYQAQLEPVRRVVMIGLPILFGLFAGSAAASQWQKALLFFNQEPFGQADPLFNMDISFYLMSLPFLGFITGFLISIAVVAGIAGILTHYLYGSIRLMERGIFTSRAAQIHIAVTGALFLILLGVNFWLDRYTTVQSNSGRWAGALYTDVNAVVPTKAILAVAAGLVAILFIIAAIIGRWRLPVIGTAMLVITAILAGGVYPWVIQQFQVRPSENTLEKEFIDRNIKMTRAAYGLDKIDVSAYNATTTATTGALAADAQTTANIRLLDPNLISSAFAQLEQYRPYYQFPQTLNVDRYMVDGKVQDTVIAVRELNPDGLSANQQTWVNRHIVYTHGYGVVAAKGNKFTADGKPEFLQSGIPSNGVLGNDTSYEPRIYFGENSPEYSIVGAPDGAPNREQDRPAGREGGGETQYTFSGNGGPNVGNWLNRILYSIKFQSSDLLLSDGVNAESQILYERNPRERVEKLAPYLTVDGNAYPAVVDGRVKWIVDGYTTSQYFPYSQPQQLQNATVDSQTSAGRTVALPNSSVNYIRNSVKATVDAYDGSVNLYAWDDQDPILKAWQKVFPTVIKPYSEMSGDLMSHVRYPEDLFKVQRELLGRYHVTDPDSFYQNNDAWSVPNDPTVSEAVKQPPFYMSLQMPDQEKPAFQLTSSFIPQTVNGSARNILYGFLAADSDAGNVKGVKGESYGKLRLLELPTDTQVPGPGQAQNKFNSDPTVSQALNLLRQGASDVLNGNLLTLPVGGGLLYVQPVYLKSTGETSYPTLQRVLVAFGDKIGFAPTLDEALDQLFGGDSGATAGDSDNNGQTPTSPPGTTPPPAGPTDAKADLKAALDEANKAIQDGQAALAKGDFAGYGAQQTKLSEALKKAIDAQARLDATPAPTATPGATPSATPSPSPSS</sequence>
<name>Y2732_PAEAT</name>
<gene>
    <name type="ordered locus">AAur_2732</name>
</gene>
<proteinExistence type="inferred from homology"/>
<protein>
    <recommendedName>
        <fullName evidence="1">UPF0182 protein AAur_2732</fullName>
    </recommendedName>
</protein>
<comment type="subcellular location">
    <subcellularLocation>
        <location evidence="1">Cell membrane</location>
        <topology evidence="1">Multi-pass membrane protein</topology>
    </subcellularLocation>
</comment>
<comment type="similarity">
    <text evidence="1">Belongs to the UPF0182 family.</text>
</comment>
<comment type="sequence caution" evidence="3">
    <conflict type="erroneous initiation">
        <sequence resource="EMBL-CDS" id="ABM07879"/>
    </conflict>
</comment>
<organism>
    <name type="scientific">Paenarthrobacter aurescens (strain TC1)</name>
    <dbReference type="NCBI Taxonomy" id="290340"/>
    <lineage>
        <taxon>Bacteria</taxon>
        <taxon>Bacillati</taxon>
        <taxon>Actinomycetota</taxon>
        <taxon>Actinomycetes</taxon>
        <taxon>Micrococcales</taxon>
        <taxon>Micrococcaceae</taxon>
        <taxon>Paenarthrobacter</taxon>
    </lineage>
</organism>
<reference key="1">
    <citation type="journal article" date="2006" name="PLoS Genet.">
        <title>Secrets of soil survival revealed by the genome sequence of Arthrobacter aurescens TC1.</title>
        <authorList>
            <person name="Mongodin E.F."/>
            <person name="Shapir N."/>
            <person name="Daugherty S.C."/>
            <person name="DeBoy R.T."/>
            <person name="Emerson J.B."/>
            <person name="Shvartzbeyn A."/>
            <person name="Radune D."/>
            <person name="Vamathevan J."/>
            <person name="Riggs F."/>
            <person name="Grinberg V."/>
            <person name="Khouri H.M."/>
            <person name="Wackett L.P."/>
            <person name="Nelson K.E."/>
            <person name="Sadowsky M.J."/>
        </authorList>
    </citation>
    <scope>NUCLEOTIDE SEQUENCE [LARGE SCALE GENOMIC DNA]</scope>
    <source>
        <strain>TC1</strain>
    </source>
</reference>
<accession>A1R883</accession>